<dbReference type="EC" id="3.1.26.5"/>
<dbReference type="EMBL" id="AAFI02000177">
    <property type="protein sequence ID" value="EAL61815.1"/>
    <property type="molecule type" value="Genomic_DNA"/>
</dbReference>
<dbReference type="RefSeq" id="XP_635197.1">
    <property type="nucleotide sequence ID" value="XM_630105.1"/>
</dbReference>
<dbReference type="SMR" id="Q54EP3"/>
<dbReference type="FunCoup" id="Q54EP3">
    <property type="interactions" value="119"/>
</dbReference>
<dbReference type="STRING" id="44689.Q54EP3"/>
<dbReference type="PaxDb" id="44689-DDB0237627"/>
<dbReference type="EnsemblProtists" id="EAL61815">
    <property type="protein sequence ID" value="EAL61815"/>
    <property type="gene ID" value="DDB_G0291662"/>
</dbReference>
<dbReference type="GeneID" id="8628142"/>
<dbReference type="KEGG" id="ddi:DDB_G0291662"/>
<dbReference type="dictyBase" id="DDB_G0291662">
    <property type="gene designation" value="pop5"/>
</dbReference>
<dbReference type="VEuPathDB" id="AmoebaDB:DDB_G0291662"/>
<dbReference type="eggNOG" id="KOG4639">
    <property type="taxonomic scope" value="Eukaryota"/>
</dbReference>
<dbReference type="HOGENOM" id="CLU_086710_3_0_1"/>
<dbReference type="InParanoid" id="Q54EP3"/>
<dbReference type="OMA" id="LKCDMPN"/>
<dbReference type="PhylomeDB" id="Q54EP3"/>
<dbReference type="PRO" id="PR:Q54EP3"/>
<dbReference type="Proteomes" id="UP000002195">
    <property type="component" value="Chromosome 6"/>
</dbReference>
<dbReference type="GO" id="GO:0030681">
    <property type="term" value="C:multimeric ribonuclease P complex"/>
    <property type="evidence" value="ECO:0000318"/>
    <property type="project" value="GO_Central"/>
</dbReference>
<dbReference type="GO" id="GO:0005655">
    <property type="term" value="C:nucleolar ribonuclease P complex"/>
    <property type="evidence" value="ECO:0000250"/>
    <property type="project" value="dictyBase"/>
</dbReference>
<dbReference type="GO" id="GO:0005730">
    <property type="term" value="C:nucleolus"/>
    <property type="evidence" value="ECO:0000318"/>
    <property type="project" value="GO_Central"/>
</dbReference>
<dbReference type="GO" id="GO:0000172">
    <property type="term" value="C:ribonuclease MRP complex"/>
    <property type="evidence" value="ECO:0000250"/>
    <property type="project" value="dictyBase"/>
</dbReference>
<dbReference type="GO" id="GO:0004526">
    <property type="term" value="F:ribonuclease P activity"/>
    <property type="evidence" value="ECO:0000250"/>
    <property type="project" value="dictyBase"/>
</dbReference>
<dbReference type="GO" id="GO:0033204">
    <property type="term" value="F:ribonuclease P RNA binding"/>
    <property type="evidence" value="ECO:0000318"/>
    <property type="project" value="GO_Central"/>
</dbReference>
<dbReference type="GO" id="GO:0001682">
    <property type="term" value="P:tRNA 5'-leader removal"/>
    <property type="evidence" value="ECO:0000318"/>
    <property type="project" value="GO_Central"/>
</dbReference>
<dbReference type="Gene3D" id="3.30.70.3250">
    <property type="entry name" value="Ribonuclease P, Pop5 subunit"/>
    <property type="match status" value="1"/>
</dbReference>
<dbReference type="InterPro" id="IPR002759">
    <property type="entry name" value="Pop5/Rpp14/Rnp2-like"/>
</dbReference>
<dbReference type="InterPro" id="IPR038085">
    <property type="entry name" value="Rnp2-like_sf"/>
</dbReference>
<dbReference type="PANTHER" id="PTHR15441">
    <property type="entry name" value="RIBONUCLEASE P PROTEIN SUBUNIT P14"/>
    <property type="match status" value="1"/>
</dbReference>
<dbReference type="PANTHER" id="PTHR15441:SF2">
    <property type="entry name" value="RIBONUCLEASE P_MRP PROTEIN SUBUNIT POP5"/>
    <property type="match status" value="1"/>
</dbReference>
<dbReference type="Pfam" id="PF01900">
    <property type="entry name" value="RNase_P_Rpp14"/>
    <property type="match status" value="1"/>
</dbReference>
<dbReference type="SUPFAM" id="SSF160350">
    <property type="entry name" value="Rnp2-like"/>
    <property type="match status" value="1"/>
</dbReference>
<sequence>MVRLKNRYLMTEVIWHDNEKSTQLSDSWLFQFISNEVKEKLGELTYEAFKKTLKIIYVNPDTNIFIIRVSFEYYKSLWTALTLITSYYGVPIYFRMVHVGGSIRLCQKAAIKIFGKQISVYDKNKILRNEKGETIDNNNNKNEEPSIKMDSDDDENGGGDDGEDNDSEMKD</sequence>
<proteinExistence type="inferred from homology"/>
<comment type="function">
    <text evidence="1">Component of ribonuclease P, a protein complex that generates mature tRNA molecules by cleaving their 5'-ends. Also a component of RNase MRP (By similarity).</text>
</comment>
<comment type="catalytic activity">
    <reaction>
        <text>Endonucleolytic cleavage of RNA, removing 5'-extranucleotides from tRNA precursor.</text>
        <dbReference type="EC" id="3.1.26.5"/>
    </reaction>
</comment>
<comment type="subcellular location">
    <subcellularLocation>
        <location evidence="1">Nucleus</location>
        <location evidence="1">Nucleolus</location>
    </subcellularLocation>
</comment>
<comment type="similarity">
    <text evidence="3">Belongs to the eukaryotic/archaeal RNase P protein component 2 family.</text>
</comment>
<keyword id="KW-0378">Hydrolase</keyword>
<keyword id="KW-0539">Nucleus</keyword>
<keyword id="KW-1185">Reference proteome</keyword>
<keyword id="KW-0819">tRNA processing</keyword>
<gene>
    <name type="primary">pop5</name>
    <name type="ORF">DDB_G0291662</name>
</gene>
<feature type="chain" id="PRO_0000327380" description="Probable ribonuclease P/MRP protein subunit POP5">
    <location>
        <begin position="1"/>
        <end position="171"/>
    </location>
</feature>
<feature type="region of interest" description="Disordered" evidence="2">
    <location>
        <begin position="131"/>
        <end position="171"/>
    </location>
</feature>
<feature type="compositionally biased region" description="Basic and acidic residues" evidence="2">
    <location>
        <begin position="141"/>
        <end position="150"/>
    </location>
</feature>
<feature type="compositionally biased region" description="Acidic residues" evidence="2">
    <location>
        <begin position="151"/>
        <end position="171"/>
    </location>
</feature>
<accession>Q54EP3</accession>
<protein>
    <recommendedName>
        <fullName>Probable ribonuclease P/MRP protein subunit POP5</fullName>
        <ecNumber>3.1.26.5</ecNumber>
    </recommendedName>
</protein>
<name>POP5_DICDI</name>
<evidence type="ECO:0000250" key="1"/>
<evidence type="ECO:0000256" key="2">
    <source>
        <dbReference type="SAM" id="MobiDB-lite"/>
    </source>
</evidence>
<evidence type="ECO:0000305" key="3"/>
<organism>
    <name type="scientific">Dictyostelium discoideum</name>
    <name type="common">Social amoeba</name>
    <dbReference type="NCBI Taxonomy" id="44689"/>
    <lineage>
        <taxon>Eukaryota</taxon>
        <taxon>Amoebozoa</taxon>
        <taxon>Evosea</taxon>
        <taxon>Eumycetozoa</taxon>
        <taxon>Dictyostelia</taxon>
        <taxon>Dictyosteliales</taxon>
        <taxon>Dictyosteliaceae</taxon>
        <taxon>Dictyostelium</taxon>
    </lineage>
</organism>
<reference key="1">
    <citation type="journal article" date="2005" name="Nature">
        <title>The genome of the social amoeba Dictyostelium discoideum.</title>
        <authorList>
            <person name="Eichinger L."/>
            <person name="Pachebat J.A."/>
            <person name="Gloeckner G."/>
            <person name="Rajandream M.A."/>
            <person name="Sucgang R."/>
            <person name="Berriman M."/>
            <person name="Song J."/>
            <person name="Olsen R."/>
            <person name="Szafranski K."/>
            <person name="Xu Q."/>
            <person name="Tunggal B."/>
            <person name="Kummerfeld S."/>
            <person name="Madera M."/>
            <person name="Konfortov B.A."/>
            <person name="Rivero F."/>
            <person name="Bankier A.T."/>
            <person name="Lehmann R."/>
            <person name="Hamlin N."/>
            <person name="Davies R."/>
            <person name="Gaudet P."/>
            <person name="Fey P."/>
            <person name="Pilcher K."/>
            <person name="Chen G."/>
            <person name="Saunders D."/>
            <person name="Sodergren E.J."/>
            <person name="Davis P."/>
            <person name="Kerhornou A."/>
            <person name="Nie X."/>
            <person name="Hall N."/>
            <person name="Anjard C."/>
            <person name="Hemphill L."/>
            <person name="Bason N."/>
            <person name="Farbrother P."/>
            <person name="Desany B."/>
            <person name="Just E."/>
            <person name="Morio T."/>
            <person name="Rost R."/>
            <person name="Churcher C.M."/>
            <person name="Cooper J."/>
            <person name="Haydock S."/>
            <person name="van Driessche N."/>
            <person name="Cronin A."/>
            <person name="Goodhead I."/>
            <person name="Muzny D.M."/>
            <person name="Mourier T."/>
            <person name="Pain A."/>
            <person name="Lu M."/>
            <person name="Harper D."/>
            <person name="Lindsay R."/>
            <person name="Hauser H."/>
            <person name="James K.D."/>
            <person name="Quiles M."/>
            <person name="Madan Babu M."/>
            <person name="Saito T."/>
            <person name="Buchrieser C."/>
            <person name="Wardroper A."/>
            <person name="Felder M."/>
            <person name="Thangavelu M."/>
            <person name="Johnson D."/>
            <person name="Knights A."/>
            <person name="Loulseged H."/>
            <person name="Mungall K.L."/>
            <person name="Oliver K."/>
            <person name="Price C."/>
            <person name="Quail M.A."/>
            <person name="Urushihara H."/>
            <person name="Hernandez J."/>
            <person name="Rabbinowitsch E."/>
            <person name="Steffen D."/>
            <person name="Sanders M."/>
            <person name="Ma J."/>
            <person name="Kohara Y."/>
            <person name="Sharp S."/>
            <person name="Simmonds M.N."/>
            <person name="Spiegler S."/>
            <person name="Tivey A."/>
            <person name="Sugano S."/>
            <person name="White B."/>
            <person name="Walker D."/>
            <person name="Woodward J.R."/>
            <person name="Winckler T."/>
            <person name="Tanaka Y."/>
            <person name="Shaulsky G."/>
            <person name="Schleicher M."/>
            <person name="Weinstock G.M."/>
            <person name="Rosenthal A."/>
            <person name="Cox E.C."/>
            <person name="Chisholm R.L."/>
            <person name="Gibbs R.A."/>
            <person name="Loomis W.F."/>
            <person name="Platzer M."/>
            <person name="Kay R.R."/>
            <person name="Williams J.G."/>
            <person name="Dear P.H."/>
            <person name="Noegel A.A."/>
            <person name="Barrell B.G."/>
            <person name="Kuspa A."/>
        </authorList>
    </citation>
    <scope>NUCLEOTIDE SEQUENCE [LARGE SCALE GENOMIC DNA]</scope>
    <source>
        <strain>AX4</strain>
    </source>
</reference>